<feature type="initiator methionine" description="Removed" evidence="1">
    <location>
        <position position="1"/>
    </location>
</feature>
<feature type="chain" id="PRO_1000118893" description="Formamidopyrimidine-DNA glycosylase">
    <location>
        <begin position="2"/>
        <end position="299"/>
    </location>
</feature>
<feature type="zinc finger region" description="FPG-type" evidence="2">
    <location>
        <begin position="259"/>
        <end position="295"/>
    </location>
</feature>
<feature type="active site" description="Schiff-base intermediate with DNA" evidence="2">
    <location>
        <position position="2"/>
    </location>
</feature>
<feature type="active site" description="Proton donor" evidence="2">
    <location>
        <position position="3"/>
    </location>
</feature>
<feature type="active site" description="Proton donor; for beta-elimination activity" evidence="2">
    <location>
        <position position="58"/>
    </location>
</feature>
<feature type="active site" description="Proton donor; for delta-elimination activity" evidence="2">
    <location>
        <position position="285"/>
    </location>
</feature>
<feature type="binding site" evidence="2">
    <location>
        <position position="106"/>
    </location>
    <ligand>
        <name>DNA</name>
        <dbReference type="ChEBI" id="CHEBI:16991"/>
    </ligand>
</feature>
<feature type="binding site" evidence="2">
    <location>
        <position position="125"/>
    </location>
    <ligand>
        <name>DNA</name>
        <dbReference type="ChEBI" id="CHEBI:16991"/>
    </ligand>
</feature>
<feature type="binding site" evidence="2">
    <location>
        <position position="168"/>
    </location>
    <ligand>
        <name>DNA</name>
        <dbReference type="ChEBI" id="CHEBI:16991"/>
    </ligand>
</feature>
<evidence type="ECO:0000250" key="1"/>
<evidence type="ECO:0000255" key="2">
    <source>
        <dbReference type="HAMAP-Rule" id="MF_00103"/>
    </source>
</evidence>
<accession>B7KN75</accession>
<dbReference type="EC" id="3.2.2.23" evidence="2"/>
<dbReference type="EC" id="4.2.99.18" evidence="2"/>
<dbReference type="EMBL" id="CP001298">
    <property type="protein sequence ID" value="ACK85192.1"/>
    <property type="molecule type" value="Genomic_DNA"/>
</dbReference>
<dbReference type="RefSeq" id="WP_015952263.1">
    <property type="nucleotide sequence ID" value="NC_011757.1"/>
</dbReference>
<dbReference type="SMR" id="B7KN75"/>
<dbReference type="KEGG" id="mch:Mchl_4416"/>
<dbReference type="HOGENOM" id="CLU_038423_1_1_5"/>
<dbReference type="Proteomes" id="UP000002385">
    <property type="component" value="Chromosome"/>
</dbReference>
<dbReference type="GO" id="GO:0034039">
    <property type="term" value="F:8-oxo-7,8-dihydroguanine DNA N-glycosylase activity"/>
    <property type="evidence" value="ECO:0007669"/>
    <property type="project" value="TreeGrafter"/>
</dbReference>
<dbReference type="GO" id="GO:0140078">
    <property type="term" value="F:class I DNA-(apurinic or apyrimidinic site) endonuclease activity"/>
    <property type="evidence" value="ECO:0007669"/>
    <property type="project" value="UniProtKB-EC"/>
</dbReference>
<dbReference type="GO" id="GO:0003684">
    <property type="term" value="F:damaged DNA binding"/>
    <property type="evidence" value="ECO:0007669"/>
    <property type="project" value="InterPro"/>
</dbReference>
<dbReference type="GO" id="GO:0008270">
    <property type="term" value="F:zinc ion binding"/>
    <property type="evidence" value="ECO:0007669"/>
    <property type="project" value="UniProtKB-UniRule"/>
</dbReference>
<dbReference type="GO" id="GO:0006284">
    <property type="term" value="P:base-excision repair"/>
    <property type="evidence" value="ECO:0007669"/>
    <property type="project" value="InterPro"/>
</dbReference>
<dbReference type="CDD" id="cd08966">
    <property type="entry name" value="EcFpg-like_N"/>
    <property type="match status" value="1"/>
</dbReference>
<dbReference type="FunFam" id="1.10.8.50:FF:000003">
    <property type="entry name" value="Formamidopyrimidine-DNA glycosylase"/>
    <property type="match status" value="1"/>
</dbReference>
<dbReference type="Gene3D" id="1.10.8.50">
    <property type="match status" value="1"/>
</dbReference>
<dbReference type="Gene3D" id="3.20.190.10">
    <property type="entry name" value="MutM-like, N-terminal"/>
    <property type="match status" value="1"/>
</dbReference>
<dbReference type="HAMAP" id="MF_00103">
    <property type="entry name" value="Fapy_DNA_glycosyl"/>
    <property type="match status" value="1"/>
</dbReference>
<dbReference type="InterPro" id="IPR015886">
    <property type="entry name" value="DNA_glyclase/AP_lyase_DNA-bd"/>
</dbReference>
<dbReference type="InterPro" id="IPR020629">
    <property type="entry name" value="Formamido-pyr_DNA_Glyclase"/>
</dbReference>
<dbReference type="InterPro" id="IPR012319">
    <property type="entry name" value="FPG_cat"/>
</dbReference>
<dbReference type="InterPro" id="IPR035937">
    <property type="entry name" value="MutM-like_N-ter"/>
</dbReference>
<dbReference type="InterPro" id="IPR010979">
    <property type="entry name" value="Ribosomal_uS13-like_H2TH"/>
</dbReference>
<dbReference type="InterPro" id="IPR000214">
    <property type="entry name" value="Znf_DNA_glyclase/AP_lyase"/>
</dbReference>
<dbReference type="NCBIfam" id="TIGR00577">
    <property type="entry name" value="fpg"/>
    <property type="match status" value="1"/>
</dbReference>
<dbReference type="NCBIfam" id="NF002211">
    <property type="entry name" value="PRK01103.1"/>
    <property type="match status" value="1"/>
</dbReference>
<dbReference type="PANTHER" id="PTHR22993">
    <property type="entry name" value="FORMAMIDOPYRIMIDINE-DNA GLYCOSYLASE"/>
    <property type="match status" value="1"/>
</dbReference>
<dbReference type="PANTHER" id="PTHR22993:SF9">
    <property type="entry name" value="FORMAMIDOPYRIMIDINE-DNA GLYCOSYLASE"/>
    <property type="match status" value="1"/>
</dbReference>
<dbReference type="Pfam" id="PF01149">
    <property type="entry name" value="Fapy_DNA_glyco"/>
    <property type="match status" value="1"/>
</dbReference>
<dbReference type="Pfam" id="PF06831">
    <property type="entry name" value="H2TH"/>
    <property type="match status" value="1"/>
</dbReference>
<dbReference type="SMART" id="SM00898">
    <property type="entry name" value="Fapy_DNA_glyco"/>
    <property type="match status" value="1"/>
</dbReference>
<dbReference type="SMART" id="SM01232">
    <property type="entry name" value="H2TH"/>
    <property type="match status" value="1"/>
</dbReference>
<dbReference type="SUPFAM" id="SSF57716">
    <property type="entry name" value="Glucocorticoid receptor-like (DNA-binding domain)"/>
    <property type="match status" value="1"/>
</dbReference>
<dbReference type="SUPFAM" id="SSF81624">
    <property type="entry name" value="N-terminal domain of MutM-like DNA repair proteins"/>
    <property type="match status" value="1"/>
</dbReference>
<dbReference type="SUPFAM" id="SSF46946">
    <property type="entry name" value="S13-like H2TH domain"/>
    <property type="match status" value="1"/>
</dbReference>
<dbReference type="PROSITE" id="PS51068">
    <property type="entry name" value="FPG_CAT"/>
    <property type="match status" value="1"/>
</dbReference>
<dbReference type="PROSITE" id="PS51066">
    <property type="entry name" value="ZF_FPG_2"/>
    <property type="match status" value="1"/>
</dbReference>
<protein>
    <recommendedName>
        <fullName evidence="2">Formamidopyrimidine-DNA glycosylase</fullName>
        <shortName evidence="2">Fapy-DNA glycosylase</shortName>
        <ecNumber evidence="2">3.2.2.23</ecNumber>
    </recommendedName>
    <alternativeName>
        <fullName evidence="2">DNA-(apurinic or apyrimidinic site) lyase MutM</fullName>
        <shortName evidence="2">AP lyase MutM</shortName>
        <ecNumber evidence="2">4.2.99.18</ecNumber>
    </alternativeName>
</protein>
<name>FPG_METC4</name>
<comment type="function">
    <text evidence="2">Involved in base excision repair of DNA damaged by oxidation or by mutagenic agents. Acts as a DNA glycosylase that recognizes and removes damaged bases. Has a preference for oxidized purines, such as 7,8-dihydro-8-oxoguanine (8-oxoG). Has AP (apurinic/apyrimidinic) lyase activity and introduces nicks in the DNA strand. Cleaves the DNA backbone by beta-delta elimination to generate a single-strand break at the site of the removed base with both 3'- and 5'-phosphates.</text>
</comment>
<comment type="catalytic activity">
    <reaction evidence="2">
        <text>Hydrolysis of DNA containing ring-opened 7-methylguanine residues, releasing 2,6-diamino-4-hydroxy-5-(N-methyl)formamidopyrimidine.</text>
        <dbReference type="EC" id="3.2.2.23"/>
    </reaction>
</comment>
<comment type="catalytic activity">
    <reaction evidence="2">
        <text>2'-deoxyribonucleotide-(2'-deoxyribose 5'-phosphate)-2'-deoxyribonucleotide-DNA = a 3'-end 2'-deoxyribonucleotide-(2,3-dehydro-2,3-deoxyribose 5'-phosphate)-DNA + a 5'-end 5'-phospho-2'-deoxyribonucleoside-DNA + H(+)</text>
        <dbReference type="Rhea" id="RHEA:66592"/>
        <dbReference type="Rhea" id="RHEA-COMP:13180"/>
        <dbReference type="Rhea" id="RHEA-COMP:16897"/>
        <dbReference type="Rhea" id="RHEA-COMP:17067"/>
        <dbReference type="ChEBI" id="CHEBI:15378"/>
        <dbReference type="ChEBI" id="CHEBI:136412"/>
        <dbReference type="ChEBI" id="CHEBI:157695"/>
        <dbReference type="ChEBI" id="CHEBI:167181"/>
        <dbReference type="EC" id="4.2.99.18"/>
    </reaction>
</comment>
<comment type="cofactor">
    <cofactor evidence="2">
        <name>Zn(2+)</name>
        <dbReference type="ChEBI" id="CHEBI:29105"/>
    </cofactor>
    <text evidence="2">Binds 1 zinc ion per subunit.</text>
</comment>
<comment type="subunit">
    <text evidence="2">Monomer.</text>
</comment>
<comment type="similarity">
    <text evidence="2">Belongs to the FPG family.</text>
</comment>
<reference key="1">
    <citation type="submission" date="2008-12" db="EMBL/GenBank/DDBJ databases">
        <title>Complete sequence of chromosome of Methylobacterium chloromethanicum CM4.</title>
        <authorList>
            <consortium name="US DOE Joint Genome Institute"/>
            <person name="Lucas S."/>
            <person name="Copeland A."/>
            <person name="Lapidus A."/>
            <person name="Glavina del Rio T."/>
            <person name="Dalin E."/>
            <person name="Tice H."/>
            <person name="Bruce D."/>
            <person name="Goodwin L."/>
            <person name="Pitluck S."/>
            <person name="Chertkov O."/>
            <person name="Brettin T."/>
            <person name="Detter J.C."/>
            <person name="Han C."/>
            <person name="Larimer F."/>
            <person name="Land M."/>
            <person name="Hauser L."/>
            <person name="Kyrpides N."/>
            <person name="Mikhailova N."/>
            <person name="Marx C."/>
            <person name="Richardson P."/>
        </authorList>
    </citation>
    <scope>NUCLEOTIDE SEQUENCE [LARGE SCALE GENOMIC DNA]</scope>
    <source>
        <strain>CM4 / NCIMB 13688</strain>
    </source>
</reference>
<proteinExistence type="inferred from homology"/>
<keyword id="KW-0227">DNA damage</keyword>
<keyword id="KW-0234">DNA repair</keyword>
<keyword id="KW-0238">DNA-binding</keyword>
<keyword id="KW-0326">Glycosidase</keyword>
<keyword id="KW-0378">Hydrolase</keyword>
<keyword id="KW-0456">Lyase</keyword>
<keyword id="KW-0479">Metal-binding</keyword>
<keyword id="KW-0511">Multifunctional enzyme</keyword>
<keyword id="KW-0862">Zinc</keyword>
<keyword id="KW-0863">Zinc-finger</keyword>
<organism>
    <name type="scientific">Methylorubrum extorquens (strain CM4 / NCIMB 13688)</name>
    <name type="common">Methylobacterium extorquens</name>
    <dbReference type="NCBI Taxonomy" id="440085"/>
    <lineage>
        <taxon>Bacteria</taxon>
        <taxon>Pseudomonadati</taxon>
        <taxon>Pseudomonadota</taxon>
        <taxon>Alphaproteobacteria</taxon>
        <taxon>Hyphomicrobiales</taxon>
        <taxon>Methylobacteriaceae</taxon>
        <taxon>Methylorubrum</taxon>
    </lineage>
</organism>
<gene>
    <name evidence="2" type="primary">mutM</name>
    <name evidence="2" type="synonym">fpg</name>
    <name type="ordered locus">Mchl_4416</name>
</gene>
<sequence length="299" mass="32407">MPELPEVETVRRGLAPAMVGARVARVTLRRPNLRFPFPERFAERLEGTTVLELARRAKYLTAHLDSGESLILHLGMSGRFDVRLPDGSNLSPGDFYLEGALGTPKHDHVVMAFANGATVTYNDARRFGFMDLVATRDLETCRHFASMGVEPLSDALDAPLLARLFARKITPLKAALLDQRLIAGLGNIYVCEALHRSGLHPALPAGALAKPDGSPAPKAKTLVKEIKAVLTEAVAAGGSTLRDYARPDGERGAFQHGFRVYDRVGHACPTKGCTGRVGRIVQGGRSTFFCETCQVLPVR</sequence>